<sequence>MVVAYKHEPFTDFSVEANKLAFEEGLKKVESYLGQDYPLIIGGEKITTEDKIVSVNPANKEELVGRVSKASRELAEKAMQVADETFQTWRKSKPEMRADILFRAAAIVRRRKHEFSAILVKEAGKPWNEADADTAEAIDFMEYYGRQMLKLKDGIPVESRPIEYNRFSYIPLGVGVIISPWNFPFAIMAGMTTAALVSGNTVLLKPASTTPVVAAKFMEVLEEAGLPAGVVNFVPGNGSEVGDYLVDHPRTRFISFTGSRDVGIRIYERAAKVNPGQIWLKRVIAEMGGKDTIVVDKEADLELAAKSIVASAFGFSGQKCSACSRAVIHEDVYDHVLNRAVELTKELTVANPAVLGTNMGPVNDQAAFDKVMSYVAIGKEEGRILAGGEGDDSKGWFIQPTIVADVAEDARLMKEEIFGPVVAFCKAKDFDHALAIANNTEYGLTGAVISNNRDHIEKAREDFHVGNLYFNRGCTGAIVGYQPFGGFNMSGTDSKAGGPDYLALHMQAKTTSETL</sequence>
<gene>
    <name evidence="1" type="primary">rocA</name>
    <name type="ordered locus">BCA_0382</name>
</gene>
<feature type="chain" id="PRO_1000148097" description="1-pyrroline-5-carboxylate dehydrogenase">
    <location>
        <begin position="1"/>
        <end position="515"/>
    </location>
</feature>
<feature type="active site" evidence="1">
    <location>
        <position position="286"/>
    </location>
</feature>
<feature type="active site" evidence="1">
    <location>
        <position position="320"/>
    </location>
</feature>
<comment type="catalytic activity">
    <reaction evidence="1">
        <text>L-glutamate 5-semialdehyde + NAD(+) + H2O = L-glutamate + NADH + 2 H(+)</text>
        <dbReference type="Rhea" id="RHEA:30235"/>
        <dbReference type="ChEBI" id="CHEBI:15377"/>
        <dbReference type="ChEBI" id="CHEBI:15378"/>
        <dbReference type="ChEBI" id="CHEBI:29985"/>
        <dbReference type="ChEBI" id="CHEBI:57540"/>
        <dbReference type="ChEBI" id="CHEBI:57945"/>
        <dbReference type="ChEBI" id="CHEBI:58066"/>
        <dbReference type="EC" id="1.2.1.88"/>
    </reaction>
</comment>
<comment type="pathway">
    <text evidence="1">Amino-acid degradation; L-proline degradation into L-glutamate; L-glutamate from L-proline: step 2/2.</text>
</comment>
<comment type="similarity">
    <text evidence="1">Belongs to the aldehyde dehydrogenase family. RocA subfamily.</text>
</comment>
<proteinExistence type="inferred from homology"/>
<keyword id="KW-0520">NAD</keyword>
<keyword id="KW-0560">Oxidoreductase</keyword>
<evidence type="ECO:0000255" key="1">
    <source>
        <dbReference type="HAMAP-Rule" id="MF_00733"/>
    </source>
</evidence>
<name>ROCA_BACC3</name>
<organism>
    <name type="scientific">Bacillus cereus (strain 03BB102)</name>
    <dbReference type="NCBI Taxonomy" id="572264"/>
    <lineage>
        <taxon>Bacteria</taxon>
        <taxon>Bacillati</taxon>
        <taxon>Bacillota</taxon>
        <taxon>Bacilli</taxon>
        <taxon>Bacillales</taxon>
        <taxon>Bacillaceae</taxon>
        <taxon>Bacillus</taxon>
        <taxon>Bacillus cereus group</taxon>
    </lineage>
</organism>
<reference key="1">
    <citation type="submission" date="2009-02" db="EMBL/GenBank/DDBJ databases">
        <title>Genome sequence of Bacillus cereus 03BB102.</title>
        <authorList>
            <person name="Dodson R.J."/>
            <person name="Jackson P."/>
            <person name="Munk A.C."/>
            <person name="Brettin T."/>
            <person name="Bruce D."/>
            <person name="Detter C."/>
            <person name="Tapia R."/>
            <person name="Han C."/>
            <person name="Sutton G."/>
            <person name="Sims D."/>
        </authorList>
    </citation>
    <scope>NUCLEOTIDE SEQUENCE [LARGE SCALE GENOMIC DNA]</scope>
    <source>
        <strain>03BB102</strain>
    </source>
</reference>
<accession>C1EV77</accession>
<protein>
    <recommendedName>
        <fullName evidence="1">1-pyrroline-5-carboxylate dehydrogenase</fullName>
        <shortName evidence="1">P5C dehydrogenase</shortName>
        <ecNumber evidence="1">1.2.1.88</ecNumber>
    </recommendedName>
    <alternativeName>
        <fullName evidence="1">L-glutamate gamma-semialdehyde dehydrogenase</fullName>
    </alternativeName>
</protein>
<dbReference type="EC" id="1.2.1.88" evidence="1"/>
<dbReference type="EMBL" id="CP001407">
    <property type="protein sequence ID" value="ACO28100.1"/>
    <property type="molecule type" value="Genomic_DNA"/>
</dbReference>
<dbReference type="SMR" id="C1EV77"/>
<dbReference type="KEGG" id="bcx:BCA_0382"/>
<dbReference type="PATRIC" id="fig|572264.18.peg.371"/>
<dbReference type="UniPathway" id="UPA00261">
    <property type="reaction ID" value="UER00374"/>
</dbReference>
<dbReference type="Proteomes" id="UP000002210">
    <property type="component" value="Chromosome"/>
</dbReference>
<dbReference type="GO" id="GO:0009898">
    <property type="term" value="C:cytoplasmic side of plasma membrane"/>
    <property type="evidence" value="ECO:0007669"/>
    <property type="project" value="TreeGrafter"/>
</dbReference>
<dbReference type="GO" id="GO:0003842">
    <property type="term" value="F:1-pyrroline-5-carboxylate dehydrogenase activity"/>
    <property type="evidence" value="ECO:0007669"/>
    <property type="project" value="UniProtKB-UniRule"/>
</dbReference>
<dbReference type="GO" id="GO:0006537">
    <property type="term" value="P:glutamate biosynthetic process"/>
    <property type="evidence" value="ECO:0007669"/>
    <property type="project" value="UniProtKB-UniRule"/>
</dbReference>
<dbReference type="GO" id="GO:0010133">
    <property type="term" value="P:proline catabolic process to glutamate"/>
    <property type="evidence" value="ECO:0007669"/>
    <property type="project" value="UniProtKB-UniPathway"/>
</dbReference>
<dbReference type="CDD" id="cd07124">
    <property type="entry name" value="ALDH_PutA-P5CDH-RocA"/>
    <property type="match status" value="1"/>
</dbReference>
<dbReference type="FunFam" id="3.40.309.10:FF:000005">
    <property type="entry name" value="1-pyrroline-5-carboxylate dehydrogenase 1"/>
    <property type="match status" value="1"/>
</dbReference>
<dbReference type="FunFam" id="3.40.605.10:FF:000045">
    <property type="entry name" value="1-pyrroline-5-carboxylate dehydrogenase 1"/>
    <property type="match status" value="1"/>
</dbReference>
<dbReference type="Gene3D" id="3.40.605.10">
    <property type="entry name" value="Aldehyde Dehydrogenase, Chain A, domain 1"/>
    <property type="match status" value="1"/>
</dbReference>
<dbReference type="Gene3D" id="3.40.309.10">
    <property type="entry name" value="Aldehyde Dehydrogenase, Chain A, domain 2"/>
    <property type="match status" value="1"/>
</dbReference>
<dbReference type="HAMAP" id="MF_00733">
    <property type="entry name" value="RocA"/>
    <property type="match status" value="1"/>
</dbReference>
<dbReference type="InterPro" id="IPR016161">
    <property type="entry name" value="Ald_DH/histidinol_DH"/>
</dbReference>
<dbReference type="InterPro" id="IPR016163">
    <property type="entry name" value="Ald_DH_C"/>
</dbReference>
<dbReference type="InterPro" id="IPR016160">
    <property type="entry name" value="Ald_DH_CS_CYS"/>
</dbReference>
<dbReference type="InterPro" id="IPR029510">
    <property type="entry name" value="Ald_DH_CS_GLU"/>
</dbReference>
<dbReference type="InterPro" id="IPR016162">
    <property type="entry name" value="Ald_DH_N"/>
</dbReference>
<dbReference type="InterPro" id="IPR015590">
    <property type="entry name" value="Aldehyde_DH_dom"/>
</dbReference>
<dbReference type="InterPro" id="IPR050485">
    <property type="entry name" value="Proline_metab_enzyme"/>
</dbReference>
<dbReference type="InterPro" id="IPR005932">
    <property type="entry name" value="RocA"/>
</dbReference>
<dbReference type="InterPro" id="IPR047597">
    <property type="entry name" value="RocA_bacillales"/>
</dbReference>
<dbReference type="NCBIfam" id="TIGR01237">
    <property type="entry name" value="D1pyr5carbox2"/>
    <property type="match status" value="1"/>
</dbReference>
<dbReference type="NCBIfam" id="NF002852">
    <property type="entry name" value="PRK03137.1"/>
    <property type="match status" value="1"/>
</dbReference>
<dbReference type="PANTHER" id="PTHR42862">
    <property type="entry name" value="DELTA-1-PYRROLINE-5-CARBOXYLATE DEHYDROGENASE 1, ISOFORM A-RELATED"/>
    <property type="match status" value="1"/>
</dbReference>
<dbReference type="PANTHER" id="PTHR42862:SF1">
    <property type="entry name" value="DELTA-1-PYRROLINE-5-CARBOXYLATE DEHYDROGENASE 2, ISOFORM A-RELATED"/>
    <property type="match status" value="1"/>
</dbReference>
<dbReference type="Pfam" id="PF00171">
    <property type="entry name" value="Aldedh"/>
    <property type="match status" value="1"/>
</dbReference>
<dbReference type="SUPFAM" id="SSF53720">
    <property type="entry name" value="ALDH-like"/>
    <property type="match status" value="1"/>
</dbReference>
<dbReference type="PROSITE" id="PS00070">
    <property type="entry name" value="ALDEHYDE_DEHYDR_CYS"/>
    <property type="match status" value="1"/>
</dbReference>
<dbReference type="PROSITE" id="PS00687">
    <property type="entry name" value="ALDEHYDE_DEHYDR_GLU"/>
    <property type="match status" value="1"/>
</dbReference>